<protein>
    <recommendedName>
        <fullName evidence="1">Alanine--tRNA ligase</fullName>
        <ecNumber evidence="1">6.1.1.7</ecNumber>
    </recommendedName>
    <alternativeName>
        <fullName evidence="1">Alanyl-tRNA synthetase</fullName>
        <shortName evidence="1">AlaRS</shortName>
    </alternativeName>
</protein>
<reference key="1">
    <citation type="journal article" date="2005" name="Science">
        <title>Extensive DNA inversions in the B. fragilis genome control variable gene expression.</title>
        <authorList>
            <person name="Cerdeno-Tarraga A.-M."/>
            <person name="Patrick S."/>
            <person name="Crossman L.C."/>
            <person name="Blakely G."/>
            <person name="Abratt V."/>
            <person name="Lennard N."/>
            <person name="Poxton I."/>
            <person name="Duerden B."/>
            <person name="Harris B."/>
            <person name="Quail M.A."/>
            <person name="Barron A."/>
            <person name="Clark L."/>
            <person name="Corton C."/>
            <person name="Doggett J."/>
            <person name="Holden M.T.G."/>
            <person name="Larke N."/>
            <person name="Line A."/>
            <person name="Lord A."/>
            <person name="Norbertczak H."/>
            <person name="Ormond D."/>
            <person name="Price C."/>
            <person name="Rabbinowitsch E."/>
            <person name="Woodward J."/>
            <person name="Barrell B.G."/>
            <person name="Parkhill J."/>
        </authorList>
    </citation>
    <scope>NUCLEOTIDE SEQUENCE [LARGE SCALE GENOMIC DNA]</scope>
    <source>
        <strain>ATCC 25285 / DSM 2151 / CCUG 4856 / JCM 11019 / LMG 10263 / NCTC 9343 / Onslow / VPI 2553 / EN-2</strain>
    </source>
</reference>
<proteinExistence type="inferred from homology"/>
<feature type="chain" id="PRO_0000075060" description="Alanine--tRNA ligase">
    <location>
        <begin position="1"/>
        <end position="872"/>
    </location>
</feature>
<feature type="binding site" evidence="1">
    <location>
        <position position="563"/>
    </location>
    <ligand>
        <name>Zn(2+)</name>
        <dbReference type="ChEBI" id="CHEBI:29105"/>
    </ligand>
</feature>
<feature type="binding site" evidence="1">
    <location>
        <position position="567"/>
    </location>
    <ligand>
        <name>Zn(2+)</name>
        <dbReference type="ChEBI" id="CHEBI:29105"/>
    </ligand>
</feature>
<feature type="binding site" evidence="1">
    <location>
        <position position="665"/>
    </location>
    <ligand>
        <name>Zn(2+)</name>
        <dbReference type="ChEBI" id="CHEBI:29105"/>
    </ligand>
</feature>
<feature type="binding site" evidence="1">
    <location>
        <position position="669"/>
    </location>
    <ligand>
        <name>Zn(2+)</name>
        <dbReference type="ChEBI" id="CHEBI:29105"/>
    </ligand>
</feature>
<name>SYA_BACFN</name>
<keyword id="KW-0030">Aminoacyl-tRNA synthetase</keyword>
<keyword id="KW-0067">ATP-binding</keyword>
<keyword id="KW-0963">Cytoplasm</keyword>
<keyword id="KW-0436">Ligase</keyword>
<keyword id="KW-0479">Metal-binding</keyword>
<keyword id="KW-0547">Nucleotide-binding</keyword>
<keyword id="KW-0648">Protein biosynthesis</keyword>
<keyword id="KW-0694">RNA-binding</keyword>
<keyword id="KW-0820">tRNA-binding</keyword>
<keyword id="KW-0862">Zinc</keyword>
<evidence type="ECO:0000255" key="1">
    <source>
        <dbReference type="HAMAP-Rule" id="MF_00036"/>
    </source>
</evidence>
<comment type="function">
    <text evidence="1">Catalyzes the attachment of alanine to tRNA(Ala) in a two-step reaction: alanine is first activated by ATP to form Ala-AMP and then transferred to the acceptor end of tRNA(Ala). Also edits incorrectly charged Ser-tRNA(Ala) and Gly-tRNA(Ala) via its editing domain.</text>
</comment>
<comment type="catalytic activity">
    <reaction evidence="1">
        <text>tRNA(Ala) + L-alanine + ATP = L-alanyl-tRNA(Ala) + AMP + diphosphate</text>
        <dbReference type="Rhea" id="RHEA:12540"/>
        <dbReference type="Rhea" id="RHEA-COMP:9657"/>
        <dbReference type="Rhea" id="RHEA-COMP:9923"/>
        <dbReference type="ChEBI" id="CHEBI:30616"/>
        <dbReference type="ChEBI" id="CHEBI:33019"/>
        <dbReference type="ChEBI" id="CHEBI:57972"/>
        <dbReference type="ChEBI" id="CHEBI:78442"/>
        <dbReference type="ChEBI" id="CHEBI:78497"/>
        <dbReference type="ChEBI" id="CHEBI:456215"/>
        <dbReference type="EC" id="6.1.1.7"/>
    </reaction>
</comment>
<comment type="cofactor">
    <cofactor evidence="1">
        <name>Zn(2+)</name>
        <dbReference type="ChEBI" id="CHEBI:29105"/>
    </cofactor>
    <text evidence="1">Binds 1 zinc ion per subunit.</text>
</comment>
<comment type="subcellular location">
    <subcellularLocation>
        <location evidence="1">Cytoplasm</location>
    </subcellularLocation>
</comment>
<comment type="domain">
    <text evidence="1">Consists of three domains; the N-terminal catalytic domain, the editing domain and the C-terminal C-Ala domain. The editing domain removes incorrectly charged amino acids, while the C-Ala domain, along with tRNA(Ala), serves as a bridge to cooperatively bring together the editing and aminoacylation centers thus stimulating deacylation of misacylated tRNAs.</text>
</comment>
<comment type="similarity">
    <text evidence="1">Belongs to the class-II aminoacyl-tRNA synthetase family.</text>
</comment>
<organism>
    <name type="scientific">Bacteroides fragilis (strain ATCC 25285 / DSM 2151 / CCUG 4856 / JCM 11019 / LMG 10263 / NCTC 9343 / Onslow / VPI 2553 / EN-2)</name>
    <dbReference type="NCBI Taxonomy" id="272559"/>
    <lineage>
        <taxon>Bacteria</taxon>
        <taxon>Pseudomonadati</taxon>
        <taxon>Bacteroidota</taxon>
        <taxon>Bacteroidia</taxon>
        <taxon>Bacteroidales</taxon>
        <taxon>Bacteroidaceae</taxon>
        <taxon>Bacteroides</taxon>
    </lineage>
</organism>
<gene>
    <name evidence="1" type="primary">alaS</name>
    <name type="ordered locus">BF0689</name>
</gene>
<sequence length="872" mass="97664">MLTAKETRDSFKNFFESKGHQIVPSAPMVIKDDPTLMFTNAGMNQFKDIILGNHPAKYHRVADSQKCLRVSGKHNDLEEVGHDTYHHTMFEMLGNWSFGDYFKKEAISWAWEYLVDVLKLNPEHLYATVFEGSPEEGLERDNEAASYWEQYLPKDHIINGNKHDNFWEMGDTGPCGPCSEIHIDLRPAEERAKISGRDLVNHDHPQVIEIWNLVFMQYNRKADSTLEPLPAKVIDTGMGFERLCMALQGKTSNYDTDVFQPLIKAIAQMAGTEYGKNEQNDIAMRVIADHIRTIAFSITDGQLPSNAKAGYVIRRILRRAVRYGYTFLGQKQAFMYKLLPVLIDSMGDAYPELIAQKELIEKVIKEEEESFLRTLETGIRLLDKTMADTKANGKTEISGKDAFTLYDTFGFPLDLTELILRENGMTVNVEEFDAEMQQQKQRARNAAAIETGDWIILKEGTTEFVGYDYTEYETSILRYRQVKQKNQTLYQIVLDYTPFYAESGGQVGDTGVLVNEFETIEVIDTKKENNLPIHITKKLPEHPEAPMMACVDTDKRAACAANHSATHLLDEALREVLGEHVEQKGSLVTPDSLRFDFSHFQKVTDEELRKVEHLVNAKIRANVPLQEHRNIPIEEAKELGAIALFGEKYGDHVRVIQFGSSIEFCGGTHVAATGNIGMVKIISESSVAAGVRRIEAYTGARVEEMLDTIQDTLSDLKALFNNTPDLGVAIRKYIDENAGLKKQVEDFMKEKEAAVKERLLKNVQEINGIKVIKFCLPMPAEVVKNIAFQLRGEITENLFFVAGTVDANKPMLTVMISDNLVAGGLKAGNLVKEAAKLIQGGGGGQPHFATAGGKNPDGLNAAVEKVLELAGI</sequence>
<accession>Q5LHE6</accession>
<dbReference type="EC" id="6.1.1.7" evidence="1"/>
<dbReference type="EMBL" id="CR626927">
    <property type="protein sequence ID" value="CAH06434.1"/>
    <property type="molecule type" value="Genomic_DNA"/>
</dbReference>
<dbReference type="RefSeq" id="WP_010992145.1">
    <property type="nucleotide sequence ID" value="NC_003228.3"/>
</dbReference>
<dbReference type="SMR" id="Q5LHE6"/>
<dbReference type="PaxDb" id="272559-BF9343_0655"/>
<dbReference type="GeneID" id="60370059"/>
<dbReference type="KEGG" id="bfs:BF9343_0655"/>
<dbReference type="eggNOG" id="COG0013">
    <property type="taxonomic scope" value="Bacteria"/>
</dbReference>
<dbReference type="HOGENOM" id="CLU_004485_1_1_10"/>
<dbReference type="Proteomes" id="UP000006731">
    <property type="component" value="Chromosome"/>
</dbReference>
<dbReference type="GO" id="GO:0005737">
    <property type="term" value="C:cytoplasm"/>
    <property type="evidence" value="ECO:0007669"/>
    <property type="project" value="UniProtKB-SubCell"/>
</dbReference>
<dbReference type="GO" id="GO:0004813">
    <property type="term" value="F:alanine-tRNA ligase activity"/>
    <property type="evidence" value="ECO:0007669"/>
    <property type="project" value="UniProtKB-UniRule"/>
</dbReference>
<dbReference type="GO" id="GO:0002161">
    <property type="term" value="F:aminoacyl-tRNA deacylase activity"/>
    <property type="evidence" value="ECO:0007669"/>
    <property type="project" value="TreeGrafter"/>
</dbReference>
<dbReference type="GO" id="GO:0005524">
    <property type="term" value="F:ATP binding"/>
    <property type="evidence" value="ECO:0007669"/>
    <property type="project" value="UniProtKB-UniRule"/>
</dbReference>
<dbReference type="GO" id="GO:0000049">
    <property type="term" value="F:tRNA binding"/>
    <property type="evidence" value="ECO:0007669"/>
    <property type="project" value="UniProtKB-KW"/>
</dbReference>
<dbReference type="GO" id="GO:0008270">
    <property type="term" value="F:zinc ion binding"/>
    <property type="evidence" value="ECO:0007669"/>
    <property type="project" value="UniProtKB-UniRule"/>
</dbReference>
<dbReference type="GO" id="GO:0006419">
    <property type="term" value="P:alanyl-tRNA aminoacylation"/>
    <property type="evidence" value="ECO:0007669"/>
    <property type="project" value="UniProtKB-UniRule"/>
</dbReference>
<dbReference type="CDD" id="cd00673">
    <property type="entry name" value="AlaRS_core"/>
    <property type="match status" value="1"/>
</dbReference>
<dbReference type="FunFam" id="2.40.30.130:FF:000008">
    <property type="entry name" value="Alanine--tRNA ligase"/>
    <property type="match status" value="1"/>
</dbReference>
<dbReference type="FunFam" id="3.10.310.40:FF:000001">
    <property type="entry name" value="Alanine--tRNA ligase"/>
    <property type="match status" value="1"/>
</dbReference>
<dbReference type="FunFam" id="3.30.54.20:FF:000001">
    <property type="entry name" value="Alanine--tRNA ligase"/>
    <property type="match status" value="1"/>
</dbReference>
<dbReference type="FunFam" id="3.30.930.10:FF:000011">
    <property type="entry name" value="Alanine--tRNA ligase, cytoplasmic"/>
    <property type="match status" value="1"/>
</dbReference>
<dbReference type="FunFam" id="3.30.980.10:FF:000004">
    <property type="entry name" value="Alanine--tRNA ligase, cytoplasmic"/>
    <property type="match status" value="1"/>
</dbReference>
<dbReference type="Gene3D" id="2.40.30.130">
    <property type="match status" value="1"/>
</dbReference>
<dbReference type="Gene3D" id="3.10.310.40">
    <property type="match status" value="1"/>
</dbReference>
<dbReference type="Gene3D" id="3.30.54.20">
    <property type="match status" value="1"/>
</dbReference>
<dbReference type="Gene3D" id="3.30.930.10">
    <property type="entry name" value="Bira Bifunctional Protein, Domain 2"/>
    <property type="match status" value="1"/>
</dbReference>
<dbReference type="Gene3D" id="3.30.980.10">
    <property type="entry name" value="Threonyl-trna Synthetase, Chain A, domain 2"/>
    <property type="match status" value="1"/>
</dbReference>
<dbReference type="HAMAP" id="MF_00036_B">
    <property type="entry name" value="Ala_tRNA_synth_B"/>
    <property type="match status" value="1"/>
</dbReference>
<dbReference type="InterPro" id="IPR045864">
    <property type="entry name" value="aa-tRNA-synth_II/BPL/LPL"/>
</dbReference>
<dbReference type="InterPro" id="IPR002318">
    <property type="entry name" value="Ala-tRNA-lgiase_IIc"/>
</dbReference>
<dbReference type="InterPro" id="IPR018162">
    <property type="entry name" value="Ala-tRNA-ligase_IIc_anticod-bd"/>
</dbReference>
<dbReference type="InterPro" id="IPR018165">
    <property type="entry name" value="Ala-tRNA-synth_IIc_core"/>
</dbReference>
<dbReference type="InterPro" id="IPR018164">
    <property type="entry name" value="Ala-tRNA-synth_IIc_N"/>
</dbReference>
<dbReference type="InterPro" id="IPR050058">
    <property type="entry name" value="Ala-tRNA_ligase"/>
</dbReference>
<dbReference type="InterPro" id="IPR023033">
    <property type="entry name" value="Ala_tRNA_ligase_euk/bac"/>
</dbReference>
<dbReference type="InterPro" id="IPR003156">
    <property type="entry name" value="DHHA1_dom"/>
</dbReference>
<dbReference type="InterPro" id="IPR018163">
    <property type="entry name" value="Thr/Ala-tRNA-synth_IIc_edit"/>
</dbReference>
<dbReference type="InterPro" id="IPR009000">
    <property type="entry name" value="Transl_B-barrel_sf"/>
</dbReference>
<dbReference type="InterPro" id="IPR012947">
    <property type="entry name" value="tRNA_SAD"/>
</dbReference>
<dbReference type="NCBIfam" id="TIGR00344">
    <property type="entry name" value="alaS"/>
    <property type="match status" value="1"/>
</dbReference>
<dbReference type="PANTHER" id="PTHR11777:SF9">
    <property type="entry name" value="ALANINE--TRNA LIGASE, CYTOPLASMIC"/>
    <property type="match status" value="1"/>
</dbReference>
<dbReference type="PANTHER" id="PTHR11777">
    <property type="entry name" value="ALANYL-TRNA SYNTHETASE"/>
    <property type="match status" value="1"/>
</dbReference>
<dbReference type="Pfam" id="PF02272">
    <property type="entry name" value="DHHA1"/>
    <property type="match status" value="1"/>
</dbReference>
<dbReference type="Pfam" id="PF01411">
    <property type="entry name" value="tRNA-synt_2c"/>
    <property type="match status" value="1"/>
</dbReference>
<dbReference type="Pfam" id="PF07973">
    <property type="entry name" value="tRNA_SAD"/>
    <property type="match status" value="1"/>
</dbReference>
<dbReference type="PRINTS" id="PR00980">
    <property type="entry name" value="TRNASYNTHALA"/>
</dbReference>
<dbReference type="SMART" id="SM00863">
    <property type="entry name" value="tRNA_SAD"/>
    <property type="match status" value="1"/>
</dbReference>
<dbReference type="SUPFAM" id="SSF55681">
    <property type="entry name" value="Class II aaRS and biotin synthetases"/>
    <property type="match status" value="1"/>
</dbReference>
<dbReference type="SUPFAM" id="SSF101353">
    <property type="entry name" value="Putative anticodon-binding domain of alanyl-tRNA synthetase (AlaRS)"/>
    <property type="match status" value="1"/>
</dbReference>
<dbReference type="SUPFAM" id="SSF55186">
    <property type="entry name" value="ThrRS/AlaRS common domain"/>
    <property type="match status" value="1"/>
</dbReference>
<dbReference type="SUPFAM" id="SSF50447">
    <property type="entry name" value="Translation proteins"/>
    <property type="match status" value="1"/>
</dbReference>
<dbReference type="PROSITE" id="PS50860">
    <property type="entry name" value="AA_TRNA_LIGASE_II_ALA"/>
    <property type="match status" value="1"/>
</dbReference>